<keyword id="KW-0687">Ribonucleoprotein</keyword>
<keyword id="KW-0689">Ribosomal protein</keyword>
<accession>C4K1B7</accession>
<organism>
    <name type="scientific">Rickettsia peacockii (strain Rustic)</name>
    <dbReference type="NCBI Taxonomy" id="562019"/>
    <lineage>
        <taxon>Bacteria</taxon>
        <taxon>Pseudomonadati</taxon>
        <taxon>Pseudomonadota</taxon>
        <taxon>Alphaproteobacteria</taxon>
        <taxon>Rickettsiales</taxon>
        <taxon>Rickettsiaceae</taxon>
        <taxon>Rickettsieae</taxon>
        <taxon>Rickettsia</taxon>
        <taxon>spotted fever group</taxon>
    </lineage>
</organism>
<comment type="similarity">
    <text evidence="1">Belongs to the bacterial ribosomal protein bL28 family.</text>
</comment>
<protein>
    <recommendedName>
        <fullName evidence="1">Large ribosomal subunit protein bL28</fullName>
    </recommendedName>
    <alternativeName>
        <fullName evidence="2">50S ribosomal protein L28</fullName>
    </alternativeName>
</protein>
<sequence length="97" mass="10765">MSRKCELTGVGVLYGNNVSHSQRKTRRRFKPNLRSVKFTSDITAGEYRLSVNARCISSVEKAGGFDAYILKADDNVLSSNARAIKKKIIQTKTAKSL</sequence>
<name>RL28_RICPU</name>
<dbReference type="EMBL" id="CP001227">
    <property type="protein sequence ID" value="ACR47368.1"/>
    <property type="molecule type" value="Genomic_DNA"/>
</dbReference>
<dbReference type="RefSeq" id="WP_012736624.1">
    <property type="nucleotide sequence ID" value="NC_012730.1"/>
</dbReference>
<dbReference type="SMR" id="C4K1B7"/>
<dbReference type="KEGG" id="rpk:RPR_02800"/>
<dbReference type="HOGENOM" id="CLU_064548_4_2_5"/>
<dbReference type="Proteomes" id="UP000005015">
    <property type="component" value="Chromosome"/>
</dbReference>
<dbReference type="GO" id="GO:1990904">
    <property type="term" value="C:ribonucleoprotein complex"/>
    <property type="evidence" value="ECO:0007669"/>
    <property type="project" value="UniProtKB-KW"/>
</dbReference>
<dbReference type="GO" id="GO:0005840">
    <property type="term" value="C:ribosome"/>
    <property type="evidence" value="ECO:0007669"/>
    <property type="project" value="UniProtKB-KW"/>
</dbReference>
<dbReference type="GO" id="GO:0003735">
    <property type="term" value="F:structural constituent of ribosome"/>
    <property type="evidence" value="ECO:0007669"/>
    <property type="project" value="InterPro"/>
</dbReference>
<dbReference type="GO" id="GO:0006412">
    <property type="term" value="P:translation"/>
    <property type="evidence" value="ECO:0007669"/>
    <property type="project" value="UniProtKB-UniRule"/>
</dbReference>
<dbReference type="Gene3D" id="2.30.170.40">
    <property type="entry name" value="Ribosomal protein L28/L24"/>
    <property type="match status" value="1"/>
</dbReference>
<dbReference type="HAMAP" id="MF_00373">
    <property type="entry name" value="Ribosomal_bL28"/>
    <property type="match status" value="1"/>
</dbReference>
<dbReference type="InterPro" id="IPR026569">
    <property type="entry name" value="Ribosomal_bL28"/>
</dbReference>
<dbReference type="InterPro" id="IPR034704">
    <property type="entry name" value="Ribosomal_bL28/bL31-like_sf"/>
</dbReference>
<dbReference type="InterPro" id="IPR001383">
    <property type="entry name" value="Ribosomal_bL28_bact-type"/>
</dbReference>
<dbReference type="InterPro" id="IPR037147">
    <property type="entry name" value="Ribosomal_bL28_sf"/>
</dbReference>
<dbReference type="NCBIfam" id="TIGR00009">
    <property type="entry name" value="L28"/>
    <property type="match status" value="1"/>
</dbReference>
<dbReference type="PANTHER" id="PTHR13528">
    <property type="entry name" value="39S RIBOSOMAL PROTEIN L28, MITOCHONDRIAL"/>
    <property type="match status" value="1"/>
</dbReference>
<dbReference type="PANTHER" id="PTHR13528:SF2">
    <property type="entry name" value="LARGE RIBOSOMAL SUBUNIT PROTEIN BL28M"/>
    <property type="match status" value="1"/>
</dbReference>
<dbReference type="Pfam" id="PF00830">
    <property type="entry name" value="Ribosomal_L28"/>
    <property type="match status" value="1"/>
</dbReference>
<dbReference type="SUPFAM" id="SSF143800">
    <property type="entry name" value="L28p-like"/>
    <property type="match status" value="1"/>
</dbReference>
<evidence type="ECO:0000255" key="1">
    <source>
        <dbReference type="HAMAP-Rule" id="MF_00373"/>
    </source>
</evidence>
<evidence type="ECO:0000305" key="2"/>
<feature type="chain" id="PRO_1000205610" description="Large ribosomal subunit protein bL28">
    <location>
        <begin position="1"/>
        <end position="97"/>
    </location>
</feature>
<gene>
    <name evidence="1" type="primary">rpmB</name>
    <name type="ordered locus">RPR_02800</name>
</gene>
<reference key="1">
    <citation type="journal article" date="2009" name="PLoS ONE">
        <title>Genome sequence of the endosymbiont Rickettsia peacockii and comparison with virulent Rickettsia rickettsii: identification of virulence factors.</title>
        <authorList>
            <person name="Felsheim R.F."/>
            <person name="Kurtti T.J."/>
            <person name="Munderloh U.G."/>
        </authorList>
    </citation>
    <scope>NUCLEOTIDE SEQUENCE [LARGE SCALE GENOMIC DNA]</scope>
    <source>
        <strain>Rustic</strain>
    </source>
</reference>
<proteinExistence type="inferred from homology"/>